<proteinExistence type="evidence at protein level"/>
<accession>Q7Z2T5</accession>
<accession>Q5TEN0</accession>
<accession>Q6ZMX0</accession>
<accession>Q8IWH5</accession>
<accession>Q8NC68</accession>
<accession>Q9BZQ1</accession>
<gene>
    <name evidence="10 13" type="primary">TRMT1L</name>
    <name evidence="13" type="synonym">C1orf25</name>
    <name type="synonym">TRM1L</name>
    <name type="ORF">MSTP070</name>
</gene>
<comment type="function">
    <text evidence="7 8">Specifically dimethylates a single guanine residue at position 27 of tRNA(Tyr) using S-adenosyl-L-methionine as donor of the methyl groups (PubMed:39786990, PubMed:39786998). Dimethylation at position 27 of tRNA(Tyr) is required for efficient translation of tyrosine codons (PubMed:39786990, PubMed:39786998). Also required to maintain 3-(3-amino-3-carboxypropyl)uridine (acp3U) in the D-loop of several cytoplasmic tRNAs (PubMed:39786990, PubMed:39786998).</text>
</comment>
<comment type="catalytic activity">
    <reaction evidence="7 8">
        <text>guanosine(27) in tRNA(Tyr) + 2 S-adenosyl-L-methionine = N(2)-dimethylguanosine(27) in tRNA(Tyr) + 2 S-adenosyl-L-homocysteine + 2 H(+)</text>
        <dbReference type="Rhea" id="RHEA:83895"/>
        <dbReference type="Rhea" id="RHEA-COMP:20240"/>
        <dbReference type="Rhea" id="RHEA-COMP:20241"/>
        <dbReference type="ChEBI" id="CHEBI:15378"/>
        <dbReference type="ChEBI" id="CHEBI:57856"/>
        <dbReference type="ChEBI" id="CHEBI:59789"/>
        <dbReference type="ChEBI" id="CHEBI:74269"/>
        <dbReference type="ChEBI" id="CHEBI:74513"/>
    </reaction>
    <physiologicalReaction direction="left-to-right" evidence="7 8">
        <dbReference type="Rhea" id="RHEA:83896"/>
    </physiologicalReaction>
</comment>
<comment type="interaction">
    <interactant intactId="EBI-1237316">
        <id>Q7Z2T5</id>
    </interactant>
    <interactant intactId="EBI-389564">
        <id>Q00403</id>
        <label>GTF2B</label>
    </interactant>
    <organismsDiffer>false</organismsDiffer>
    <experiments>3</experiments>
</comment>
<comment type="subcellular location">
    <subcellularLocation>
        <location evidence="6 8 12">Nucleus</location>
        <location evidence="6 8 12">Nucleolus</location>
    </subcellularLocation>
</comment>
<comment type="alternative products">
    <event type="alternative splicing"/>
    <isoform>
        <id>Q7Z2T5-1</id>
        <name>1</name>
        <sequence type="displayed"/>
    </isoform>
    <isoform>
        <id>Q7Z2T5-2</id>
        <name>2</name>
        <sequence type="described" ref="VSP_031042 VSP_031043"/>
    </isoform>
</comment>
<comment type="tissue specificity">
    <text evidence="5">Widely expressed.</text>
</comment>
<comment type="similarity">
    <text evidence="3">Belongs to the class I-like SAM-binding methyltransferase superfamily. Trm1 family.</text>
</comment>
<comment type="sequence caution" evidence="11">
    <conflict type="miscellaneous discrepancy">
        <sequence resource="EMBL-CDS" id="AAH39738"/>
    </conflict>
    <text>Contaminating sequence. Potential poly-A sequence.</text>
</comment>
<comment type="sequence caution" evidence="11">
    <conflict type="erroneous initiation">
        <sequence resource="EMBL-CDS" id="AAQ13590"/>
    </conflict>
    <text>Truncated N-terminus.</text>
</comment>
<reference key="1">
    <citation type="journal article" date="2001" name="Genomics">
        <title>Cloning and characterization of 13 novel transcripts and the human RGS8 gene from the 1q25 region encompassing the hereditary prostate cancer (HPC1) locus.</title>
        <authorList>
            <person name="Sood R."/>
            <person name="Bonner T.I."/>
            <person name="Malakowska I."/>
            <person name="Stephan D.A."/>
            <person name="Robbins C.M."/>
            <person name="Connors T.D."/>
            <person name="Morgenbesser S.D."/>
            <person name="Su K."/>
            <person name="Faruque M.U."/>
            <person name="Pinkett H."/>
            <person name="Graham C."/>
            <person name="Baxevanis A.D."/>
            <person name="Klinger K.W."/>
            <person name="Landes G.M."/>
            <person name="Trent J.M."/>
            <person name="Carpten J.D."/>
        </authorList>
    </citation>
    <scope>NUCLEOTIDE SEQUENCE [MRNA] (ISOFORM 1)</scope>
    <scope>TISSUE SPECIFICITY</scope>
</reference>
<reference key="2">
    <citation type="journal article" date="2004" name="Nat. Genet.">
        <title>Complete sequencing and characterization of 21,243 full-length human cDNAs.</title>
        <authorList>
            <person name="Ota T."/>
            <person name="Suzuki Y."/>
            <person name="Nishikawa T."/>
            <person name="Otsuki T."/>
            <person name="Sugiyama T."/>
            <person name="Irie R."/>
            <person name="Wakamatsu A."/>
            <person name="Hayashi K."/>
            <person name="Sato H."/>
            <person name="Nagai K."/>
            <person name="Kimura K."/>
            <person name="Makita H."/>
            <person name="Sekine M."/>
            <person name="Obayashi M."/>
            <person name="Nishi T."/>
            <person name="Shibahara T."/>
            <person name="Tanaka T."/>
            <person name="Ishii S."/>
            <person name="Yamamoto J."/>
            <person name="Saito K."/>
            <person name="Kawai Y."/>
            <person name="Isono Y."/>
            <person name="Nakamura Y."/>
            <person name="Nagahari K."/>
            <person name="Murakami K."/>
            <person name="Yasuda T."/>
            <person name="Iwayanagi T."/>
            <person name="Wagatsuma M."/>
            <person name="Shiratori A."/>
            <person name="Sudo H."/>
            <person name="Hosoiri T."/>
            <person name="Kaku Y."/>
            <person name="Kodaira H."/>
            <person name="Kondo H."/>
            <person name="Sugawara M."/>
            <person name="Takahashi M."/>
            <person name="Kanda K."/>
            <person name="Yokoi T."/>
            <person name="Furuya T."/>
            <person name="Kikkawa E."/>
            <person name="Omura Y."/>
            <person name="Abe K."/>
            <person name="Kamihara K."/>
            <person name="Katsuta N."/>
            <person name="Sato K."/>
            <person name="Tanikawa M."/>
            <person name="Yamazaki M."/>
            <person name="Ninomiya K."/>
            <person name="Ishibashi T."/>
            <person name="Yamashita H."/>
            <person name="Murakawa K."/>
            <person name="Fujimori K."/>
            <person name="Tanai H."/>
            <person name="Kimata M."/>
            <person name="Watanabe M."/>
            <person name="Hiraoka S."/>
            <person name="Chiba Y."/>
            <person name="Ishida S."/>
            <person name="Ono Y."/>
            <person name="Takiguchi S."/>
            <person name="Watanabe S."/>
            <person name="Yosida M."/>
            <person name="Hotuta T."/>
            <person name="Kusano J."/>
            <person name="Kanehori K."/>
            <person name="Takahashi-Fujii A."/>
            <person name="Hara H."/>
            <person name="Tanase T.-O."/>
            <person name="Nomura Y."/>
            <person name="Togiya S."/>
            <person name="Komai F."/>
            <person name="Hara R."/>
            <person name="Takeuchi K."/>
            <person name="Arita M."/>
            <person name="Imose N."/>
            <person name="Musashino K."/>
            <person name="Yuuki H."/>
            <person name="Oshima A."/>
            <person name="Sasaki N."/>
            <person name="Aotsuka S."/>
            <person name="Yoshikawa Y."/>
            <person name="Matsunawa H."/>
            <person name="Ichihara T."/>
            <person name="Shiohata N."/>
            <person name="Sano S."/>
            <person name="Moriya S."/>
            <person name="Momiyama H."/>
            <person name="Satoh N."/>
            <person name="Takami S."/>
            <person name="Terashima Y."/>
            <person name="Suzuki O."/>
            <person name="Nakagawa S."/>
            <person name="Senoh A."/>
            <person name="Mizoguchi H."/>
            <person name="Goto Y."/>
            <person name="Shimizu F."/>
            <person name="Wakebe H."/>
            <person name="Hishigaki H."/>
            <person name="Watanabe T."/>
            <person name="Sugiyama A."/>
            <person name="Takemoto M."/>
            <person name="Kawakami B."/>
            <person name="Yamazaki M."/>
            <person name="Watanabe K."/>
            <person name="Kumagai A."/>
            <person name="Itakura S."/>
            <person name="Fukuzumi Y."/>
            <person name="Fujimori Y."/>
            <person name="Komiyama M."/>
            <person name="Tashiro H."/>
            <person name="Tanigami A."/>
            <person name="Fujiwara T."/>
            <person name="Ono T."/>
            <person name="Yamada K."/>
            <person name="Fujii Y."/>
            <person name="Ozaki K."/>
            <person name="Hirao M."/>
            <person name="Ohmori Y."/>
            <person name="Kawabata A."/>
            <person name="Hikiji T."/>
            <person name="Kobatake N."/>
            <person name="Inagaki H."/>
            <person name="Ikema Y."/>
            <person name="Okamoto S."/>
            <person name="Okitani R."/>
            <person name="Kawakami T."/>
            <person name="Noguchi S."/>
            <person name="Itoh T."/>
            <person name="Shigeta K."/>
            <person name="Senba T."/>
            <person name="Matsumura K."/>
            <person name="Nakajima Y."/>
            <person name="Mizuno T."/>
            <person name="Morinaga M."/>
            <person name="Sasaki M."/>
            <person name="Togashi T."/>
            <person name="Oyama M."/>
            <person name="Hata H."/>
            <person name="Watanabe M."/>
            <person name="Komatsu T."/>
            <person name="Mizushima-Sugano J."/>
            <person name="Satoh T."/>
            <person name="Shirai Y."/>
            <person name="Takahashi Y."/>
            <person name="Nakagawa K."/>
            <person name="Okumura K."/>
            <person name="Nagase T."/>
            <person name="Nomura N."/>
            <person name="Kikuchi H."/>
            <person name="Masuho Y."/>
            <person name="Yamashita R."/>
            <person name="Nakai K."/>
            <person name="Yada T."/>
            <person name="Nakamura Y."/>
            <person name="Ohara O."/>
            <person name="Isogai T."/>
            <person name="Sugano S."/>
        </authorList>
    </citation>
    <scope>NUCLEOTIDE SEQUENCE [LARGE SCALE MRNA] (ISOFORMS 1 AND 2)</scope>
    <source>
        <tissue>Teratocarcinoma</tissue>
        <tissue>Testis</tissue>
    </source>
</reference>
<reference key="3">
    <citation type="journal article" date="2006" name="Nature">
        <title>The DNA sequence and biological annotation of human chromosome 1.</title>
        <authorList>
            <person name="Gregory S.G."/>
            <person name="Barlow K.F."/>
            <person name="McLay K.E."/>
            <person name="Kaul R."/>
            <person name="Swarbreck D."/>
            <person name="Dunham A."/>
            <person name="Scott C.E."/>
            <person name="Howe K.L."/>
            <person name="Woodfine K."/>
            <person name="Spencer C.C.A."/>
            <person name="Jones M.C."/>
            <person name="Gillson C."/>
            <person name="Searle S."/>
            <person name="Zhou Y."/>
            <person name="Kokocinski F."/>
            <person name="McDonald L."/>
            <person name="Evans R."/>
            <person name="Phillips K."/>
            <person name="Atkinson A."/>
            <person name="Cooper R."/>
            <person name="Jones C."/>
            <person name="Hall R.E."/>
            <person name="Andrews T.D."/>
            <person name="Lloyd C."/>
            <person name="Ainscough R."/>
            <person name="Almeida J.P."/>
            <person name="Ambrose K.D."/>
            <person name="Anderson F."/>
            <person name="Andrew R.W."/>
            <person name="Ashwell R.I.S."/>
            <person name="Aubin K."/>
            <person name="Babbage A.K."/>
            <person name="Bagguley C.L."/>
            <person name="Bailey J."/>
            <person name="Beasley H."/>
            <person name="Bethel G."/>
            <person name="Bird C.P."/>
            <person name="Bray-Allen S."/>
            <person name="Brown J.Y."/>
            <person name="Brown A.J."/>
            <person name="Buckley D."/>
            <person name="Burton J."/>
            <person name="Bye J."/>
            <person name="Carder C."/>
            <person name="Chapman J.C."/>
            <person name="Clark S.Y."/>
            <person name="Clarke G."/>
            <person name="Clee C."/>
            <person name="Cobley V."/>
            <person name="Collier R.E."/>
            <person name="Corby N."/>
            <person name="Coville G.J."/>
            <person name="Davies J."/>
            <person name="Deadman R."/>
            <person name="Dunn M."/>
            <person name="Earthrowl M."/>
            <person name="Ellington A.G."/>
            <person name="Errington H."/>
            <person name="Frankish A."/>
            <person name="Frankland J."/>
            <person name="French L."/>
            <person name="Garner P."/>
            <person name="Garnett J."/>
            <person name="Gay L."/>
            <person name="Ghori M.R.J."/>
            <person name="Gibson R."/>
            <person name="Gilby L.M."/>
            <person name="Gillett W."/>
            <person name="Glithero R.J."/>
            <person name="Grafham D.V."/>
            <person name="Griffiths C."/>
            <person name="Griffiths-Jones S."/>
            <person name="Grocock R."/>
            <person name="Hammond S."/>
            <person name="Harrison E.S.I."/>
            <person name="Hart E."/>
            <person name="Haugen E."/>
            <person name="Heath P.D."/>
            <person name="Holmes S."/>
            <person name="Holt K."/>
            <person name="Howden P.J."/>
            <person name="Hunt A.R."/>
            <person name="Hunt S.E."/>
            <person name="Hunter G."/>
            <person name="Isherwood J."/>
            <person name="James R."/>
            <person name="Johnson C."/>
            <person name="Johnson D."/>
            <person name="Joy A."/>
            <person name="Kay M."/>
            <person name="Kershaw J.K."/>
            <person name="Kibukawa M."/>
            <person name="Kimberley A.M."/>
            <person name="King A."/>
            <person name="Knights A.J."/>
            <person name="Lad H."/>
            <person name="Laird G."/>
            <person name="Lawlor S."/>
            <person name="Leongamornlert D.A."/>
            <person name="Lloyd D.M."/>
            <person name="Loveland J."/>
            <person name="Lovell J."/>
            <person name="Lush M.J."/>
            <person name="Lyne R."/>
            <person name="Martin S."/>
            <person name="Mashreghi-Mohammadi M."/>
            <person name="Matthews L."/>
            <person name="Matthews N.S.W."/>
            <person name="McLaren S."/>
            <person name="Milne S."/>
            <person name="Mistry S."/>
            <person name="Moore M.J.F."/>
            <person name="Nickerson T."/>
            <person name="O'Dell C.N."/>
            <person name="Oliver K."/>
            <person name="Palmeiri A."/>
            <person name="Palmer S.A."/>
            <person name="Parker A."/>
            <person name="Patel D."/>
            <person name="Pearce A.V."/>
            <person name="Peck A.I."/>
            <person name="Pelan S."/>
            <person name="Phelps K."/>
            <person name="Phillimore B.J."/>
            <person name="Plumb R."/>
            <person name="Rajan J."/>
            <person name="Raymond C."/>
            <person name="Rouse G."/>
            <person name="Saenphimmachak C."/>
            <person name="Sehra H.K."/>
            <person name="Sheridan E."/>
            <person name="Shownkeen R."/>
            <person name="Sims S."/>
            <person name="Skuce C.D."/>
            <person name="Smith M."/>
            <person name="Steward C."/>
            <person name="Subramanian S."/>
            <person name="Sycamore N."/>
            <person name="Tracey A."/>
            <person name="Tromans A."/>
            <person name="Van Helmond Z."/>
            <person name="Wall M."/>
            <person name="Wallis J.M."/>
            <person name="White S."/>
            <person name="Whitehead S.L."/>
            <person name="Wilkinson J.E."/>
            <person name="Willey D.L."/>
            <person name="Williams H."/>
            <person name="Wilming L."/>
            <person name="Wray P.W."/>
            <person name="Wu Z."/>
            <person name="Coulson A."/>
            <person name="Vaudin M."/>
            <person name="Sulston J.E."/>
            <person name="Durbin R.M."/>
            <person name="Hubbard T."/>
            <person name="Wooster R."/>
            <person name="Dunham I."/>
            <person name="Carter N.P."/>
            <person name="McVean G."/>
            <person name="Ross M.T."/>
            <person name="Harrow J."/>
            <person name="Olson M.V."/>
            <person name="Beck S."/>
            <person name="Rogers J."/>
            <person name="Bentley D.R."/>
        </authorList>
    </citation>
    <scope>NUCLEOTIDE SEQUENCE [LARGE SCALE GENOMIC DNA]</scope>
</reference>
<reference key="4">
    <citation type="submission" date="2005-07" db="EMBL/GenBank/DDBJ databases">
        <authorList>
            <person name="Mural R.J."/>
            <person name="Istrail S."/>
            <person name="Sutton G.G."/>
            <person name="Florea L."/>
            <person name="Halpern A.L."/>
            <person name="Mobarry C.M."/>
            <person name="Lippert R."/>
            <person name="Walenz B."/>
            <person name="Shatkay H."/>
            <person name="Dew I."/>
            <person name="Miller J.R."/>
            <person name="Flanigan M.J."/>
            <person name="Edwards N.J."/>
            <person name="Bolanos R."/>
            <person name="Fasulo D."/>
            <person name="Halldorsson B.V."/>
            <person name="Hannenhalli S."/>
            <person name="Turner R."/>
            <person name="Yooseph S."/>
            <person name="Lu F."/>
            <person name="Nusskern D.R."/>
            <person name="Shue B.C."/>
            <person name="Zheng X.H."/>
            <person name="Zhong F."/>
            <person name="Delcher A.L."/>
            <person name="Huson D.H."/>
            <person name="Kravitz S.A."/>
            <person name="Mouchard L."/>
            <person name="Reinert K."/>
            <person name="Remington K.A."/>
            <person name="Clark A.G."/>
            <person name="Waterman M.S."/>
            <person name="Eichler E.E."/>
            <person name="Adams M.D."/>
            <person name="Hunkapiller M.W."/>
            <person name="Myers E.W."/>
            <person name="Venter J.C."/>
        </authorList>
    </citation>
    <scope>NUCLEOTIDE SEQUENCE [LARGE SCALE GENOMIC DNA]</scope>
</reference>
<reference key="5">
    <citation type="journal article" date="2004" name="Genome Res.">
        <title>The status, quality, and expansion of the NIH full-length cDNA project: the Mammalian Gene Collection (MGC).</title>
        <authorList>
            <consortium name="The MGC Project Team"/>
        </authorList>
    </citation>
    <scope>NUCLEOTIDE SEQUENCE [LARGE SCALE MRNA] (ISOFORM 1)</scope>
    <source>
        <tissue>Testis</tissue>
    </source>
</reference>
<reference key="6">
    <citation type="submission" date="1999-06" db="EMBL/GenBank/DDBJ databases">
        <authorList>
            <person name="Hui R.T."/>
        </authorList>
    </citation>
    <scope>NUCLEOTIDE SEQUENCE [LARGE SCALE MRNA] OF 423-733</scope>
    <source>
        <tissue>Aorta</tissue>
    </source>
</reference>
<reference key="7">
    <citation type="journal article" date="2008" name="Proc. Natl. Acad. Sci. U.S.A.">
        <title>A quantitative atlas of mitotic phosphorylation.</title>
        <authorList>
            <person name="Dephoure N."/>
            <person name="Zhou C."/>
            <person name="Villen J."/>
            <person name="Beausoleil S.A."/>
            <person name="Bakalarski C.E."/>
            <person name="Elledge S.J."/>
            <person name="Gygi S.P."/>
        </authorList>
    </citation>
    <scope>IDENTIFICATION BY MASS SPECTROMETRY [LARGE SCALE ANALYSIS]</scope>
    <source>
        <tissue>Cervix carcinoma</tissue>
    </source>
</reference>
<reference key="8">
    <citation type="journal article" date="2011" name="BMC Syst. Biol.">
        <title>Initial characterization of the human central proteome.</title>
        <authorList>
            <person name="Burkard T.R."/>
            <person name="Planyavsky M."/>
            <person name="Kaupe I."/>
            <person name="Breitwieser F.P."/>
            <person name="Buerckstuemmer T."/>
            <person name="Bennett K.L."/>
            <person name="Superti-Furga G."/>
            <person name="Colinge J."/>
        </authorList>
    </citation>
    <scope>IDENTIFICATION BY MASS SPECTROMETRY [LARGE SCALE ANALYSIS]</scope>
</reference>
<reference key="9">
    <citation type="journal article" date="2013" name="J. Proteome Res.">
        <title>Toward a comprehensive characterization of a human cancer cell phosphoproteome.</title>
        <authorList>
            <person name="Zhou H."/>
            <person name="Di Palma S."/>
            <person name="Preisinger C."/>
            <person name="Peng M."/>
            <person name="Polat A.N."/>
            <person name="Heck A.J."/>
            <person name="Mohammed S."/>
        </authorList>
    </citation>
    <scope>PHOSPHORYLATION [LARGE SCALE ANALYSIS] AT THR-26; SER-612 AND SER-707</scope>
    <scope>IDENTIFICATION BY MASS SPECTROMETRY [LARGE SCALE ANALYSIS]</scope>
    <source>
        <tissue>Cervix carcinoma</tissue>
        <tissue>Erythroleukemia</tissue>
    </source>
</reference>
<reference key="10">
    <citation type="journal article" date="2014" name="J. Proteomics">
        <title>An enzyme assisted RP-RPLC approach for in-depth analysis of human liver phosphoproteome.</title>
        <authorList>
            <person name="Bian Y."/>
            <person name="Song C."/>
            <person name="Cheng K."/>
            <person name="Dong M."/>
            <person name="Wang F."/>
            <person name="Huang J."/>
            <person name="Sun D."/>
            <person name="Wang L."/>
            <person name="Ye M."/>
            <person name="Zou H."/>
        </authorList>
    </citation>
    <scope>PHOSPHORYLATION [LARGE SCALE ANALYSIS] AT SER-66</scope>
    <scope>IDENTIFICATION BY MASS SPECTROMETRY [LARGE SCALE ANALYSIS]</scope>
    <source>
        <tissue>Liver</tissue>
    </source>
</reference>
<reference key="11">
    <citation type="journal article" date="2017" name="Mol. Cell. Biol.">
        <title>TRMT1-catalyzed tRNA modifications are required for redox homeostasis to ensure proper cellular proliferation and oxidative stress survival.</title>
        <authorList>
            <person name="Dewe J.M."/>
            <person name="Fuller B.L."/>
            <person name="Lentini J.M."/>
            <person name="Kellner S.M."/>
            <person name="Fu D."/>
        </authorList>
    </citation>
    <scope>SUBCELLULAR LOCATION</scope>
</reference>
<reference key="12">
    <citation type="journal article" date="2017" name="Nat. Struct. Mol. Biol.">
        <title>Site-specific mapping of the human SUMO proteome reveals co-modification with phosphorylation.</title>
        <authorList>
            <person name="Hendriks I.A."/>
            <person name="Lyon D."/>
            <person name="Young C."/>
            <person name="Jensen L.J."/>
            <person name="Vertegaal A.C."/>
            <person name="Nielsen M.L."/>
        </authorList>
    </citation>
    <scope>SUMOYLATION [LARGE SCALE ANALYSIS] AT LYS-585</scope>
    <scope>IDENTIFICATION BY MASS SPECTROMETRY [LARGE SCALE ANALYSIS]</scope>
</reference>
<reference key="13">
    <citation type="journal article" date="2021" name="RNA Biol.">
        <title>Subcellular relocalization and nuclear redistribution of the RNA methyltransferases TRMT1 and TRMT1L upon neuronal activation.</title>
        <authorList>
            <person name="Jonkhout N."/>
            <person name="Cruciani S."/>
            <person name="Santos Vieira H.G."/>
            <person name="Tran J."/>
            <person name="Liu H."/>
            <person name="Liu G."/>
            <person name="Pickford R."/>
            <person name="Kaczorowski D."/>
            <person name="Franco G.R."/>
            <person name="Vauti F."/>
            <person name="Camacho N."/>
            <person name="Abedini S.S."/>
            <person name="Najmabadi H."/>
            <person name="Ribas de Pouplana L."/>
            <person name="Christ D."/>
            <person name="Schonrock N."/>
            <person name="Mattick J.S."/>
            <person name="Novoa E.M."/>
        </authorList>
    </citation>
    <scope>SUBCELLULAR LOCATION</scope>
</reference>
<reference key="14">
    <citation type="journal article" date="2025" name="Cell Rep.">
        <title>Human TRMT1 and TRMT1L paralogs ensure the proper modification state, stability, and function of tRNAs.</title>
        <authorList>
            <person name="Zhang K."/>
            <person name="Manning A.C."/>
            <person name="Lentini J.M."/>
            <person name="Howard J."/>
            <person name="Dalwigk F."/>
            <person name="Maroofian R."/>
            <person name="Efthymiou S."/>
            <person name="Chan P."/>
            <person name="Eliseev S.I."/>
            <person name="Yang Z."/>
            <person name="Chang H."/>
            <person name="Karimiani E.G."/>
            <person name="Bakhshoodeh B."/>
            <person name="Houlden H."/>
            <person name="Kaiser S.M."/>
            <person name="Lowe T.M."/>
            <person name="Fu D."/>
        </authorList>
    </citation>
    <scope>FUNCTION</scope>
    <scope>CATALYTIC ACTIVITY</scope>
    <scope>MUTAGENESIS OF ASP-373</scope>
    <scope>VARIANT LEU-512</scope>
    <scope>CHARACTERIZATION OF VARIANT LEU-512</scope>
</reference>
<reference key="15">
    <citation type="journal article" date="2025" name="Cell Rep.">
        <title>TRMT1L-catalyzed m22G27 on tyrosine tRNA is required for efficient mRNA translation and cell survival under oxidative stress.</title>
        <authorList>
            <person name="Hwang S.P."/>
            <person name="Liao H."/>
            <person name="Barondeau K."/>
            <person name="Han X."/>
            <person name="Herbert C."/>
            <person name="McConie H."/>
            <person name="Shekar A."/>
            <person name="Pestov D.G."/>
            <person name="Limbach P.A."/>
            <person name="Chang J.T."/>
            <person name="Denicourt C."/>
        </authorList>
    </citation>
    <scope>FUNCTION</scope>
    <scope>CATALYTIC ACTIVITY</scope>
    <scope>SUBCELLULAR LOCATION</scope>
    <scope>MUTAGENESIS OF 135-HIS--ARG-139</scope>
</reference>
<dbReference type="EC" id="2.1.1.-" evidence="7 8"/>
<dbReference type="EMBL" id="AF288399">
    <property type="protein sequence ID" value="AAG60618.1"/>
    <property type="molecule type" value="mRNA"/>
</dbReference>
<dbReference type="EMBL" id="AK074936">
    <property type="protein sequence ID" value="BAC11302.1"/>
    <property type="molecule type" value="mRNA"/>
</dbReference>
<dbReference type="EMBL" id="AK074993">
    <property type="protein sequence ID" value="BAC11341.1"/>
    <property type="molecule type" value="mRNA"/>
</dbReference>
<dbReference type="EMBL" id="AK131460">
    <property type="protein sequence ID" value="BAD18605.1"/>
    <property type="molecule type" value="mRNA"/>
</dbReference>
<dbReference type="EMBL" id="AL109865">
    <property type="status" value="NOT_ANNOTATED_CDS"/>
    <property type="molecule type" value="Genomic_DNA"/>
</dbReference>
<dbReference type="EMBL" id="AL136133">
    <property type="status" value="NOT_ANNOTATED_CDS"/>
    <property type="molecule type" value="Genomic_DNA"/>
</dbReference>
<dbReference type="EMBL" id="CH471067">
    <property type="protein sequence ID" value="EAW91190.1"/>
    <property type="molecule type" value="Genomic_DNA"/>
</dbReference>
<dbReference type="EMBL" id="BC039738">
    <property type="protein sequence ID" value="AAH39738.1"/>
    <property type="status" value="ALT_SEQ"/>
    <property type="molecule type" value="mRNA"/>
</dbReference>
<dbReference type="EMBL" id="BC045535">
    <property type="protein sequence ID" value="AAH45535.1"/>
    <property type="molecule type" value="mRNA"/>
</dbReference>
<dbReference type="EMBL" id="AF163261">
    <property type="protein sequence ID" value="AAQ13590.1"/>
    <property type="status" value="ALT_INIT"/>
    <property type="molecule type" value="mRNA"/>
</dbReference>
<dbReference type="CCDS" id="CCDS1366.1">
    <molecule id="Q7Z2T5-1"/>
</dbReference>
<dbReference type="RefSeq" id="NP_001189352.1">
    <property type="nucleotide sequence ID" value="NM_001202423.1"/>
</dbReference>
<dbReference type="RefSeq" id="NP_112196.3">
    <molecule id="Q7Z2T5-1"/>
    <property type="nucleotide sequence ID" value="NM_030934.4"/>
</dbReference>
<dbReference type="SMR" id="Q7Z2T5"/>
<dbReference type="BioGRID" id="123562">
    <property type="interactions" value="244"/>
</dbReference>
<dbReference type="FunCoup" id="Q7Z2T5">
    <property type="interactions" value="2411"/>
</dbReference>
<dbReference type="IntAct" id="Q7Z2T5">
    <property type="interactions" value="127"/>
</dbReference>
<dbReference type="MINT" id="Q7Z2T5"/>
<dbReference type="STRING" id="9606.ENSP00000356476"/>
<dbReference type="GlyGen" id="Q7Z2T5">
    <property type="glycosylation" value="4 sites, 1 O-linked glycan (1 site)"/>
</dbReference>
<dbReference type="iPTMnet" id="Q7Z2T5"/>
<dbReference type="MetOSite" id="Q7Z2T5"/>
<dbReference type="PhosphoSitePlus" id="Q7Z2T5"/>
<dbReference type="SwissPalm" id="Q7Z2T5"/>
<dbReference type="BioMuta" id="TRMT1L"/>
<dbReference type="DMDM" id="166988174"/>
<dbReference type="jPOST" id="Q7Z2T5"/>
<dbReference type="MassIVE" id="Q7Z2T5"/>
<dbReference type="PaxDb" id="9606-ENSP00000356476"/>
<dbReference type="PeptideAtlas" id="Q7Z2T5"/>
<dbReference type="ProteomicsDB" id="68967">
    <molecule id="Q7Z2T5-1"/>
</dbReference>
<dbReference type="ProteomicsDB" id="68968">
    <molecule id="Q7Z2T5-2"/>
</dbReference>
<dbReference type="Pumba" id="Q7Z2T5"/>
<dbReference type="Antibodypedia" id="20610">
    <property type="antibodies" value="85 antibodies from 14 providers"/>
</dbReference>
<dbReference type="DNASU" id="81627"/>
<dbReference type="Ensembl" id="ENST00000367506.10">
    <molecule id="Q7Z2T5-1"/>
    <property type="protein sequence ID" value="ENSP00000356476.5"/>
    <property type="gene ID" value="ENSG00000121486.12"/>
</dbReference>
<dbReference type="GeneID" id="81627"/>
<dbReference type="KEGG" id="hsa:81627"/>
<dbReference type="MANE-Select" id="ENST00000367506.10">
    <property type="protein sequence ID" value="ENSP00000356476.5"/>
    <property type="RefSeq nucleotide sequence ID" value="NM_030934.5"/>
    <property type="RefSeq protein sequence ID" value="NP_112196.3"/>
</dbReference>
<dbReference type="UCSC" id="uc001grf.5">
    <molecule id="Q7Z2T5-1"/>
    <property type="organism name" value="human"/>
</dbReference>
<dbReference type="AGR" id="HGNC:16782"/>
<dbReference type="CTD" id="81627"/>
<dbReference type="GeneCards" id="TRMT1L"/>
<dbReference type="HGNC" id="HGNC:16782">
    <property type="gene designation" value="TRMT1L"/>
</dbReference>
<dbReference type="HPA" id="ENSG00000121486">
    <property type="expression patterns" value="Low tissue specificity"/>
</dbReference>
<dbReference type="MIM" id="611673">
    <property type="type" value="gene"/>
</dbReference>
<dbReference type="neXtProt" id="NX_Q7Z2T5"/>
<dbReference type="OpenTargets" id="ENSG00000121486"/>
<dbReference type="PharmGKB" id="PA25612"/>
<dbReference type="VEuPathDB" id="HostDB:ENSG00000121486"/>
<dbReference type="eggNOG" id="KOG1253">
    <property type="taxonomic scope" value="Eukaryota"/>
</dbReference>
<dbReference type="GeneTree" id="ENSGT00530000063646"/>
<dbReference type="HOGENOM" id="CLU_010862_3_0_1"/>
<dbReference type="InParanoid" id="Q7Z2T5"/>
<dbReference type="OMA" id="CICHLSC"/>
<dbReference type="OrthoDB" id="6349953at2759"/>
<dbReference type="PAN-GO" id="Q7Z2T5">
    <property type="GO annotations" value="3 GO annotations based on evolutionary models"/>
</dbReference>
<dbReference type="PhylomeDB" id="Q7Z2T5"/>
<dbReference type="TreeFam" id="TF300851"/>
<dbReference type="PathwayCommons" id="Q7Z2T5"/>
<dbReference type="SignaLink" id="Q7Z2T5"/>
<dbReference type="BioGRID-ORCS" id="81627">
    <property type="hits" value="11 hits in 1157 CRISPR screens"/>
</dbReference>
<dbReference type="CD-CODE" id="91857CE7">
    <property type="entry name" value="Nucleolus"/>
</dbReference>
<dbReference type="ChiTaRS" id="TRMT1L">
    <property type="organism name" value="human"/>
</dbReference>
<dbReference type="GenomeRNAi" id="81627"/>
<dbReference type="Pharos" id="Q7Z2T5">
    <property type="development level" value="Tdark"/>
</dbReference>
<dbReference type="PRO" id="PR:Q7Z2T5"/>
<dbReference type="Proteomes" id="UP000005640">
    <property type="component" value="Chromosome 1"/>
</dbReference>
<dbReference type="RNAct" id="Q7Z2T5">
    <property type="molecule type" value="protein"/>
</dbReference>
<dbReference type="Bgee" id="ENSG00000121486">
    <property type="expression patterns" value="Expressed in bronchial epithelial cell and 200 other cell types or tissues"/>
</dbReference>
<dbReference type="ExpressionAtlas" id="Q7Z2T5">
    <property type="expression patterns" value="baseline and differential"/>
</dbReference>
<dbReference type="GO" id="GO:0005730">
    <property type="term" value="C:nucleolus"/>
    <property type="evidence" value="ECO:0000314"/>
    <property type="project" value="UniProtKB"/>
</dbReference>
<dbReference type="GO" id="GO:0005634">
    <property type="term" value="C:nucleus"/>
    <property type="evidence" value="ECO:0000314"/>
    <property type="project" value="UniProtKB"/>
</dbReference>
<dbReference type="GO" id="GO:0003723">
    <property type="term" value="F:RNA binding"/>
    <property type="evidence" value="ECO:0007005"/>
    <property type="project" value="UniProtKB"/>
</dbReference>
<dbReference type="GO" id="GO:0016423">
    <property type="term" value="F:tRNA (guanine) methyltransferase activity"/>
    <property type="evidence" value="ECO:0007669"/>
    <property type="project" value="InterPro"/>
</dbReference>
<dbReference type="GO" id="GO:0000049">
    <property type="term" value="F:tRNA binding"/>
    <property type="evidence" value="ECO:0007669"/>
    <property type="project" value="UniProtKB-KW"/>
</dbReference>
<dbReference type="GO" id="GO:0008270">
    <property type="term" value="F:zinc ion binding"/>
    <property type="evidence" value="ECO:0007669"/>
    <property type="project" value="UniProtKB-KW"/>
</dbReference>
<dbReference type="GO" id="GO:0002940">
    <property type="term" value="P:tRNA N2-guanine methylation"/>
    <property type="evidence" value="ECO:0000314"/>
    <property type="project" value="UniProtKB"/>
</dbReference>
<dbReference type="CDD" id="cd02440">
    <property type="entry name" value="AdoMet_MTases"/>
    <property type="match status" value="1"/>
</dbReference>
<dbReference type="FunFam" id="3.40.50.150:FF:000098">
    <property type="entry name" value="Trmt1-like isoform 1"/>
    <property type="match status" value="1"/>
</dbReference>
<dbReference type="FunFam" id="3.30.56.70:FF:000001">
    <property type="entry name" value="tRNA (guanine(26)-N(2))-dimethyltransferase"/>
    <property type="match status" value="1"/>
</dbReference>
<dbReference type="Gene3D" id="3.30.56.70">
    <property type="entry name" value="N2,N2-dimethylguanosine tRNA methyltransferase, C-terminal domain"/>
    <property type="match status" value="1"/>
</dbReference>
<dbReference type="Gene3D" id="3.40.50.150">
    <property type="entry name" value="Vaccinia Virus protein VP39"/>
    <property type="match status" value="1"/>
</dbReference>
<dbReference type="InterPro" id="IPR029063">
    <property type="entry name" value="SAM-dependent_MTases_sf"/>
</dbReference>
<dbReference type="InterPro" id="IPR002905">
    <property type="entry name" value="Trm1"/>
</dbReference>
<dbReference type="InterPro" id="IPR042296">
    <property type="entry name" value="tRNA_met_Trm1_C"/>
</dbReference>
<dbReference type="InterPro" id="IPR013087">
    <property type="entry name" value="Znf_C2H2_type"/>
</dbReference>
<dbReference type="PANTHER" id="PTHR10631">
    <property type="entry name" value="N 2 ,N 2 -DIMETHYLGUANOSINE TRNA METHYLTRANSFERASE"/>
    <property type="match status" value="1"/>
</dbReference>
<dbReference type="PANTHER" id="PTHR10631:SF1">
    <property type="entry name" value="TRMT1-LIKE PROTEIN"/>
    <property type="match status" value="1"/>
</dbReference>
<dbReference type="Pfam" id="PF02005">
    <property type="entry name" value="TRM"/>
    <property type="match status" value="2"/>
</dbReference>
<dbReference type="SMART" id="SM00355">
    <property type="entry name" value="ZnF_C2H2"/>
    <property type="match status" value="2"/>
</dbReference>
<dbReference type="SUPFAM" id="SSF53335">
    <property type="entry name" value="S-adenosyl-L-methionine-dependent methyltransferases"/>
    <property type="match status" value="1"/>
</dbReference>
<dbReference type="PROSITE" id="PS51626">
    <property type="entry name" value="SAM_MT_TRM1"/>
    <property type="match status" value="1"/>
</dbReference>
<dbReference type="PROSITE" id="PS00028">
    <property type="entry name" value="ZINC_FINGER_C2H2_1"/>
    <property type="match status" value="1"/>
</dbReference>
<dbReference type="PROSITE" id="PS50157">
    <property type="entry name" value="ZINC_FINGER_C2H2_2"/>
    <property type="match status" value="1"/>
</dbReference>
<keyword id="KW-0025">Alternative splicing</keyword>
<keyword id="KW-1017">Isopeptide bond</keyword>
<keyword id="KW-0479">Metal-binding</keyword>
<keyword id="KW-0489">Methyltransferase</keyword>
<keyword id="KW-0539">Nucleus</keyword>
<keyword id="KW-0597">Phosphoprotein</keyword>
<keyword id="KW-1267">Proteomics identification</keyword>
<keyword id="KW-1185">Reference proteome</keyword>
<keyword id="KW-0694">RNA-binding</keyword>
<keyword id="KW-0949">S-adenosyl-L-methionine</keyword>
<keyword id="KW-0808">Transferase</keyword>
<keyword id="KW-0819">tRNA processing</keyword>
<keyword id="KW-0820">tRNA-binding</keyword>
<keyword id="KW-0832">Ubl conjugation</keyword>
<keyword id="KW-0862">Zinc</keyword>
<keyword id="KW-0863">Zinc-finger</keyword>
<sequence length="733" mass="81747">MENMAEEELLPLEKEEVEVAQVQVPTPARDSAGVPAPAPDSALDSAPTPASAPAPAPALAQAPALSPSLASAPEEAKSKRHISIQRQLADLENLAFVTDGNFDSASSLNSDNLDAGNRQACPLCPKEKFRACNSHKLRRHLQNLHWKVSVEFEGYRMCICHLPCRPVKPNIIGEQITSKMGAHYHCIICSATITRRTDMLGHVRRHMNKGETKSSYIAASTAKPPKEILKEADTDVQVCPNYSIPQKTDSYFNPKMKLNRQLIFCTLAALAEERKPLECLDAFGATGIMGLQWAKHLGNAVKVTINDLNENSVTLIQENCHLNKLKVVVDSKEKEKSDDILEEGEKNLGNIKVTKMDANVLMHLRSFDFIHLDPFGTSVNYLDSAFRNIRNLGIVSVTSTDISSLYAKAQHVARRHYGCNIVRTEYYKELAARIVVAAVARAAARCNKGIEVLFAVALEHFVLVVVRVLRGPTSADETAKKIQYLIHCQWCEERIFQKDGNMVEENPYRQLPCNCHGSMPGKTAIELGPLWSSSLFNTGFLKRMLFESLHHGLDDIQTLIKTLIFESECTPQSQFSIHASSNVNKQEENGVFIKTTDDTTTDNYIAQGKRKSNEMITNLGKKQKTDVSTEHPPFYYNIHRHSIKGMNMPKLKKFLCYLSQAGFRVSRTHFDPMGVRTDAPLMQFKSILLKYSTPTYTGGQSESHVQSASEDTVTERVEMSVNDKAEASGCRRW</sequence>
<organism>
    <name type="scientific">Homo sapiens</name>
    <name type="common">Human</name>
    <dbReference type="NCBI Taxonomy" id="9606"/>
    <lineage>
        <taxon>Eukaryota</taxon>
        <taxon>Metazoa</taxon>
        <taxon>Chordata</taxon>
        <taxon>Craniata</taxon>
        <taxon>Vertebrata</taxon>
        <taxon>Euteleostomi</taxon>
        <taxon>Mammalia</taxon>
        <taxon>Eutheria</taxon>
        <taxon>Euarchontoglires</taxon>
        <taxon>Primates</taxon>
        <taxon>Haplorrhini</taxon>
        <taxon>Catarrhini</taxon>
        <taxon>Hominidae</taxon>
        <taxon>Homo</taxon>
    </lineage>
</organism>
<name>TRM1L_HUMAN</name>
<protein>
    <recommendedName>
        <fullName evidence="11">tRNA (guanine(27)-N(2))-dimethyltransferase</fullName>
        <ecNumber evidence="7 8">2.1.1.-</ecNumber>
    </recommendedName>
    <alternativeName>
        <fullName evidence="11">tRNA methyltransferase 1-like protein</fullName>
        <shortName evidence="11">TRMT1-like protein</shortName>
    </alternativeName>
</protein>
<feature type="chain" id="PRO_0000317568" description="tRNA (guanine(27)-N(2))-dimethyltransferase">
    <location>
        <begin position="1"/>
        <end position="733"/>
    </location>
</feature>
<feature type="domain" description="Trm1 methyltransferase" evidence="3">
    <location>
        <begin position="227"/>
        <end position="688"/>
    </location>
</feature>
<feature type="zinc finger region" description="C2H2-type" evidence="2">
    <location>
        <begin position="184"/>
        <end position="206"/>
    </location>
</feature>
<feature type="region of interest" description="Disordered" evidence="4">
    <location>
        <begin position="1"/>
        <end position="78"/>
    </location>
</feature>
<feature type="short sequence motif" description="Nucleolar localization signal" evidence="8">
    <location>
        <begin position="135"/>
        <end position="139"/>
    </location>
</feature>
<feature type="compositionally biased region" description="Acidic residues" evidence="4">
    <location>
        <begin position="1"/>
        <end position="18"/>
    </location>
</feature>
<feature type="compositionally biased region" description="Low complexity" evidence="4">
    <location>
        <begin position="39"/>
        <end position="49"/>
    </location>
</feature>
<feature type="compositionally biased region" description="Low complexity" evidence="4">
    <location>
        <begin position="57"/>
        <end position="73"/>
    </location>
</feature>
<feature type="binding site" evidence="1">
    <location>
        <position position="260"/>
    </location>
    <ligand>
        <name>S-adenosyl-L-methionine</name>
        <dbReference type="ChEBI" id="CHEBI:59789"/>
    </ligand>
</feature>
<feature type="binding site" evidence="1">
    <location>
        <position position="307"/>
    </location>
    <ligand>
        <name>S-adenosyl-L-methionine</name>
        <dbReference type="ChEBI" id="CHEBI:59789"/>
    </ligand>
</feature>
<feature type="binding site" evidence="1">
    <location>
        <position position="357"/>
    </location>
    <ligand>
        <name>S-adenosyl-L-methionine</name>
        <dbReference type="ChEBI" id="CHEBI:59789"/>
    </ligand>
</feature>
<feature type="binding site" evidence="1">
    <location>
        <position position="358"/>
    </location>
    <ligand>
        <name>S-adenosyl-L-methionine</name>
        <dbReference type="ChEBI" id="CHEBI:59789"/>
    </ligand>
</feature>
<feature type="binding site" evidence="1">
    <location>
        <position position="488"/>
    </location>
    <ligand>
        <name>Zn(2+)</name>
        <dbReference type="ChEBI" id="CHEBI:29105"/>
    </ligand>
</feature>
<feature type="binding site" evidence="1">
    <location>
        <position position="491"/>
    </location>
    <ligand>
        <name>Zn(2+)</name>
        <dbReference type="ChEBI" id="CHEBI:29105"/>
    </ligand>
</feature>
<feature type="binding site" evidence="1">
    <location>
        <position position="513"/>
    </location>
    <ligand>
        <name>Zn(2+)</name>
        <dbReference type="ChEBI" id="CHEBI:29105"/>
    </ligand>
</feature>
<feature type="binding site" evidence="1">
    <location>
        <position position="515"/>
    </location>
    <ligand>
        <name>Zn(2+)</name>
        <dbReference type="ChEBI" id="CHEBI:29105"/>
    </ligand>
</feature>
<feature type="modified residue" description="Phosphothreonine" evidence="14">
    <location>
        <position position="26"/>
    </location>
</feature>
<feature type="modified residue" description="Phosphoserine" evidence="15">
    <location>
        <position position="66"/>
    </location>
</feature>
<feature type="modified residue" description="Phosphoserine" evidence="14">
    <location>
        <position position="612"/>
    </location>
</feature>
<feature type="modified residue" description="Phosphoserine" evidence="14">
    <location>
        <position position="707"/>
    </location>
</feature>
<feature type="cross-link" description="Glycyl lysine isopeptide (Lys-Gly) (interchain with G-Cter in SUMO2)" evidence="16">
    <location>
        <position position="585"/>
    </location>
</feature>
<feature type="splice variant" id="VSP_031042" description="In isoform 2." evidence="9">
    <location>
        <begin position="1"/>
        <end position="156"/>
    </location>
</feature>
<feature type="splice variant" id="VSP_031043" description="In isoform 2." evidence="9">
    <original>ENPYRQLPCNCHGSMPGKTAIELGPLWSSSLFNTGFLKRMLFESLHHGLDDIQTLIKTLIFESECTPQSQFSIHASSNVNKQEENGVFIKTTDDTTTDNYIAQGKRKSNEMITNLGKKQKTDVSTEHPPFYYNIHRHSIKGMNMPKLKKFLCYLSQAGFRVSRTHFDPMGVRTDAPLMQFKSILLKYSTPTYTGGQSESHVQSASEDTVTERVEMSVNDKAEASGCRRW</original>
    <variation>DYSANFVISYTGFPFVNRQDIRKTHIDSCLVTVMEACLERQQ</variation>
    <location>
        <begin position="505"/>
        <end position="733"/>
    </location>
</feature>
<feature type="sequence variant" id="VAR_090324" description="Found in patients with early-onset neurodegenerative symptoms; uncertain significance; reduced ability to maintain acp3U without affecting tRNA guanine-dimethyltransferase activity." evidence="7">
    <original>P</original>
    <variation>L</variation>
    <location>
        <position position="512"/>
    </location>
</feature>
<feature type="mutagenesis site" description="Abolished nucleolar localization." evidence="8">
    <original>HKLRR</original>
    <variation>AAAA</variation>
    <location>
        <begin position="135"/>
        <end position="139"/>
    </location>
</feature>
<feature type="mutagenesis site" description="Abolished tRNA guanine-dimethyltransferase activity." evidence="7">
    <original>D</original>
    <variation>A</variation>
    <location>
        <position position="373"/>
    </location>
</feature>
<feature type="sequence conflict" description="In Ref. 2; BAC11302." evidence="11" ref="2">
    <original>R</original>
    <variation>G</variation>
    <location>
        <position position="156"/>
    </location>
</feature>
<feature type="sequence conflict" description="In Ref. 2; BAD18605." evidence="11" ref="2">
    <original>N</original>
    <variation>S</variation>
    <location>
        <position position="319"/>
    </location>
</feature>
<evidence type="ECO:0000250" key="1">
    <source>
        <dbReference type="UniProtKB" id="O67010"/>
    </source>
</evidence>
<evidence type="ECO:0000255" key="2">
    <source>
        <dbReference type="PROSITE-ProRule" id="PRU00042"/>
    </source>
</evidence>
<evidence type="ECO:0000255" key="3">
    <source>
        <dbReference type="PROSITE-ProRule" id="PRU00958"/>
    </source>
</evidence>
<evidence type="ECO:0000256" key="4">
    <source>
        <dbReference type="SAM" id="MobiDB-lite"/>
    </source>
</evidence>
<evidence type="ECO:0000269" key="5">
    <source>
    </source>
</evidence>
<evidence type="ECO:0000269" key="6">
    <source>
    </source>
</evidence>
<evidence type="ECO:0000269" key="7">
    <source>
    </source>
</evidence>
<evidence type="ECO:0000269" key="8">
    <source>
    </source>
</evidence>
<evidence type="ECO:0000303" key="9">
    <source>
    </source>
</evidence>
<evidence type="ECO:0000303" key="10">
    <source>
    </source>
</evidence>
<evidence type="ECO:0000305" key="11"/>
<evidence type="ECO:0000305" key="12">
    <source>
    </source>
</evidence>
<evidence type="ECO:0000312" key="13">
    <source>
        <dbReference type="HGNC" id="HGNC:16782"/>
    </source>
</evidence>
<evidence type="ECO:0007744" key="14">
    <source>
    </source>
</evidence>
<evidence type="ECO:0007744" key="15">
    <source>
    </source>
</evidence>
<evidence type="ECO:0007744" key="16">
    <source>
    </source>
</evidence>